<accession>Q0U6G5</accession>
<feature type="chain" id="PRO_0000411884" description="Probable Xaa-Pro aminopeptidase PEPP">
    <location>
        <begin position="1"/>
        <end position="463"/>
    </location>
</feature>
<feature type="binding site" evidence="1">
    <location>
        <position position="259"/>
    </location>
    <ligand>
        <name>Mn(2+)</name>
        <dbReference type="ChEBI" id="CHEBI:29035"/>
        <label>2</label>
    </ligand>
</feature>
<feature type="binding site" evidence="1">
    <location>
        <position position="270"/>
    </location>
    <ligand>
        <name>Mn(2+)</name>
        <dbReference type="ChEBI" id="CHEBI:29035"/>
        <label>1</label>
    </ligand>
</feature>
<feature type="binding site" evidence="1">
    <location>
        <position position="270"/>
    </location>
    <ligand>
        <name>Mn(2+)</name>
        <dbReference type="ChEBI" id="CHEBI:29035"/>
        <label>2</label>
    </ligand>
</feature>
<feature type="binding site" evidence="1">
    <location>
        <position position="393"/>
    </location>
    <ligand>
        <name>Mn(2+)</name>
        <dbReference type="ChEBI" id="CHEBI:29035"/>
        <label>1</label>
    </ligand>
</feature>
<feature type="binding site" evidence="1">
    <location>
        <position position="433"/>
    </location>
    <ligand>
        <name>Mn(2+)</name>
        <dbReference type="ChEBI" id="CHEBI:29035"/>
        <label>1</label>
    </ligand>
</feature>
<feature type="binding site" evidence="1">
    <location>
        <position position="433"/>
    </location>
    <ligand>
        <name>Mn(2+)</name>
        <dbReference type="ChEBI" id="CHEBI:29035"/>
        <label>2</label>
    </ligand>
</feature>
<name>AMPP3_PHANO</name>
<reference key="1">
    <citation type="journal article" date="2007" name="Plant Cell">
        <title>Dothideomycete-plant interactions illuminated by genome sequencing and EST analysis of the wheat pathogen Stagonospora nodorum.</title>
        <authorList>
            <person name="Hane J.K."/>
            <person name="Lowe R.G.T."/>
            <person name="Solomon P.S."/>
            <person name="Tan K.-C."/>
            <person name="Schoch C.L."/>
            <person name="Spatafora J.W."/>
            <person name="Crous P.W."/>
            <person name="Kodira C.D."/>
            <person name="Birren B.W."/>
            <person name="Galagan J.E."/>
            <person name="Torriani S.F.F."/>
            <person name="McDonald B.A."/>
            <person name="Oliver R.P."/>
        </authorList>
    </citation>
    <scope>NUCLEOTIDE SEQUENCE [LARGE SCALE GENOMIC DNA]</scope>
    <source>
        <strain>SN15 / ATCC MYA-4574 / FGSC 10173</strain>
    </source>
</reference>
<evidence type="ECO:0000250" key="1"/>
<evidence type="ECO:0000305" key="2"/>
<sequence length="463" mass="52024">MAIAENYDEVLKGKYPAKDHARKVAKWIVDKGGDKKGTIYLEAQKQKLNEDNDGEAPFRQRRYFFYLSGCELPDSYLTYDFPSDKLTLFIPPVEPEEVIWSGLPMSPEEAKAKYDIDDCKTTKEVNPHLASSSETAQSTIYAIPGQISDETTFLSYQNKDLEQLKTAIEYCRVTKSDYEIALIRKANVISTNAHINVMKAAAKAQNECELEAVFLKSCVERNAKNQAYHSIVAAGENGATLHYVHNAAPIKSQNLMLLDAGCEVDCYASDITRTFPIKGTFTDESLAIYKIVLDMQKQCINALKAGVLWDSIHELAHKIAIKGLLELGILKGDVEQIFKARTSVAFFPHGLGHYLGMDTHDTGGNANYADKDRMFRYLRVRGTLPARSVITVEPGIYFCRFIIEPYLKDDQQKQYIDEKVLEKYWSVGGVRIEDNILVTEDGIENLTPTPKEIDEITSLVKSG</sequence>
<gene>
    <name type="primary">PEPP</name>
    <name type="ORF">SNOG_12649</name>
</gene>
<proteinExistence type="inferred from homology"/>
<dbReference type="EC" id="3.4.11.9"/>
<dbReference type="EMBL" id="CH445347">
    <property type="protein sequence ID" value="EAT79947.1"/>
    <property type="molecule type" value="Genomic_DNA"/>
</dbReference>
<dbReference type="RefSeq" id="XP_001802870.1">
    <property type="nucleotide sequence ID" value="XM_001802818.1"/>
</dbReference>
<dbReference type="SMR" id="Q0U6G5"/>
<dbReference type="FunCoup" id="Q0U6G5">
    <property type="interactions" value="382"/>
</dbReference>
<dbReference type="STRING" id="321614.Q0U6G5"/>
<dbReference type="EnsemblFungi" id="SNOT_12649">
    <property type="protein sequence ID" value="SNOT_12649"/>
    <property type="gene ID" value="SNOG_12649"/>
</dbReference>
<dbReference type="GeneID" id="5979781"/>
<dbReference type="KEGG" id="pno:SNOG_12649"/>
<dbReference type="VEuPathDB" id="FungiDB:JI435_126490"/>
<dbReference type="eggNOG" id="KOG2737">
    <property type="taxonomic scope" value="Eukaryota"/>
</dbReference>
<dbReference type="HOGENOM" id="CLU_017266_1_2_1"/>
<dbReference type="InParanoid" id="Q0U6G5"/>
<dbReference type="OMA" id="ESKHINH"/>
<dbReference type="OrthoDB" id="10261878at2759"/>
<dbReference type="Proteomes" id="UP000001055">
    <property type="component" value="Unassembled WGS sequence"/>
</dbReference>
<dbReference type="GO" id="GO:0030145">
    <property type="term" value="F:manganese ion binding"/>
    <property type="evidence" value="ECO:0007669"/>
    <property type="project" value="InterPro"/>
</dbReference>
<dbReference type="GO" id="GO:0070006">
    <property type="term" value="F:metalloaminopeptidase activity"/>
    <property type="evidence" value="ECO:0007669"/>
    <property type="project" value="InterPro"/>
</dbReference>
<dbReference type="GO" id="GO:0008233">
    <property type="term" value="F:peptidase activity"/>
    <property type="evidence" value="ECO:0000318"/>
    <property type="project" value="GO_Central"/>
</dbReference>
<dbReference type="GO" id="GO:0006508">
    <property type="term" value="P:proteolysis"/>
    <property type="evidence" value="ECO:0000318"/>
    <property type="project" value="GO_Central"/>
</dbReference>
<dbReference type="CDD" id="cd01087">
    <property type="entry name" value="Prolidase"/>
    <property type="match status" value="1"/>
</dbReference>
<dbReference type="FunFam" id="3.90.230.10:FF:000002">
    <property type="entry name" value="Xaa-Pro aminopeptidase 3"/>
    <property type="match status" value="1"/>
</dbReference>
<dbReference type="Gene3D" id="3.90.230.10">
    <property type="entry name" value="Creatinase/methionine aminopeptidase superfamily"/>
    <property type="match status" value="1"/>
</dbReference>
<dbReference type="Gene3D" id="3.40.350.10">
    <property type="entry name" value="Creatinase/prolidase N-terminal domain"/>
    <property type="match status" value="1"/>
</dbReference>
<dbReference type="InterPro" id="IPR007865">
    <property type="entry name" value="Aminopep_P_N"/>
</dbReference>
<dbReference type="InterPro" id="IPR029149">
    <property type="entry name" value="Creatin/AminoP/Spt16_N"/>
</dbReference>
<dbReference type="InterPro" id="IPR036005">
    <property type="entry name" value="Creatinase/aminopeptidase-like"/>
</dbReference>
<dbReference type="InterPro" id="IPR000994">
    <property type="entry name" value="Pept_M24"/>
</dbReference>
<dbReference type="InterPro" id="IPR052433">
    <property type="entry name" value="X-Pro_dipept-like"/>
</dbReference>
<dbReference type="PANTHER" id="PTHR43226">
    <property type="entry name" value="XAA-PRO AMINOPEPTIDASE 3"/>
    <property type="match status" value="1"/>
</dbReference>
<dbReference type="PANTHER" id="PTHR43226:SF1">
    <property type="entry name" value="XAA-PRO DIPEPTIDASE"/>
    <property type="match status" value="1"/>
</dbReference>
<dbReference type="Pfam" id="PF05195">
    <property type="entry name" value="AMP_N"/>
    <property type="match status" value="1"/>
</dbReference>
<dbReference type="Pfam" id="PF00557">
    <property type="entry name" value="Peptidase_M24"/>
    <property type="match status" value="1"/>
</dbReference>
<dbReference type="SMART" id="SM01011">
    <property type="entry name" value="AMP_N"/>
    <property type="match status" value="1"/>
</dbReference>
<dbReference type="SUPFAM" id="SSF55920">
    <property type="entry name" value="Creatinase/aminopeptidase"/>
    <property type="match status" value="1"/>
</dbReference>
<dbReference type="SUPFAM" id="SSF53092">
    <property type="entry name" value="Creatinase/prolidase N-terminal domain"/>
    <property type="match status" value="1"/>
</dbReference>
<protein>
    <recommendedName>
        <fullName>Probable Xaa-Pro aminopeptidase PEPP</fullName>
        <ecNumber>3.4.11.9</ecNumber>
    </recommendedName>
    <alternativeName>
        <fullName>Aminoacylproline aminopeptidase</fullName>
    </alternativeName>
    <alternativeName>
        <fullName>Prolidase</fullName>
    </alternativeName>
</protein>
<keyword id="KW-0031">Aminopeptidase</keyword>
<keyword id="KW-0378">Hydrolase</keyword>
<keyword id="KW-0464">Manganese</keyword>
<keyword id="KW-0479">Metal-binding</keyword>
<keyword id="KW-0482">Metalloprotease</keyword>
<keyword id="KW-0645">Protease</keyword>
<organism>
    <name type="scientific">Phaeosphaeria nodorum (strain SN15 / ATCC MYA-4574 / FGSC 10173)</name>
    <name type="common">Glume blotch fungus</name>
    <name type="synonym">Parastagonospora nodorum</name>
    <dbReference type="NCBI Taxonomy" id="321614"/>
    <lineage>
        <taxon>Eukaryota</taxon>
        <taxon>Fungi</taxon>
        <taxon>Dikarya</taxon>
        <taxon>Ascomycota</taxon>
        <taxon>Pezizomycotina</taxon>
        <taxon>Dothideomycetes</taxon>
        <taxon>Pleosporomycetidae</taxon>
        <taxon>Pleosporales</taxon>
        <taxon>Pleosporineae</taxon>
        <taxon>Phaeosphaeriaceae</taxon>
        <taxon>Parastagonospora</taxon>
    </lineage>
</organism>
<comment type="function">
    <text evidence="1">Catalyzes the removal of a penultimate prolyl residue from the N-termini of peptides.</text>
</comment>
<comment type="catalytic activity">
    <reaction>
        <text>Release of any N-terminal amino acid, including proline, that is linked to proline, even from a dipeptide or tripeptide.</text>
        <dbReference type="EC" id="3.4.11.9"/>
    </reaction>
</comment>
<comment type="cofactor">
    <cofactor evidence="1">
        <name>Mn(2+)</name>
        <dbReference type="ChEBI" id="CHEBI:29035"/>
    </cofactor>
    <text evidence="1">Binds 2 manganese ions per subunit.</text>
</comment>
<comment type="similarity">
    <text evidence="2">Belongs to the peptidase M24B family.</text>
</comment>